<dbReference type="EC" id="2.7.13.3" evidence="1"/>
<dbReference type="EMBL" id="CP000255">
    <property type="protein sequence ID" value="ABD21971.1"/>
    <property type="molecule type" value="Genomic_DNA"/>
</dbReference>
<dbReference type="RefSeq" id="WP_000871607.1">
    <property type="nucleotide sequence ID" value="NZ_CP027476.1"/>
</dbReference>
<dbReference type="SMR" id="Q2FKN7"/>
<dbReference type="KEGG" id="saa:SAUSA300_0021"/>
<dbReference type="HOGENOM" id="CLU_000445_89_2_9"/>
<dbReference type="OMA" id="LTFWAVN"/>
<dbReference type="Proteomes" id="UP000001939">
    <property type="component" value="Chromosome"/>
</dbReference>
<dbReference type="GO" id="GO:0005886">
    <property type="term" value="C:plasma membrane"/>
    <property type="evidence" value="ECO:0007669"/>
    <property type="project" value="UniProtKB-SubCell"/>
</dbReference>
<dbReference type="GO" id="GO:0005524">
    <property type="term" value="F:ATP binding"/>
    <property type="evidence" value="ECO:0007669"/>
    <property type="project" value="UniProtKB-KW"/>
</dbReference>
<dbReference type="GO" id="GO:0046872">
    <property type="term" value="F:metal ion binding"/>
    <property type="evidence" value="ECO:0007669"/>
    <property type="project" value="UniProtKB-KW"/>
</dbReference>
<dbReference type="GO" id="GO:0000156">
    <property type="term" value="F:phosphorelay response regulator activity"/>
    <property type="evidence" value="ECO:0007669"/>
    <property type="project" value="TreeGrafter"/>
</dbReference>
<dbReference type="GO" id="GO:0000155">
    <property type="term" value="F:phosphorelay sensor kinase activity"/>
    <property type="evidence" value="ECO:0007669"/>
    <property type="project" value="InterPro"/>
</dbReference>
<dbReference type="GO" id="GO:0030295">
    <property type="term" value="F:protein kinase activator activity"/>
    <property type="evidence" value="ECO:0007669"/>
    <property type="project" value="TreeGrafter"/>
</dbReference>
<dbReference type="GO" id="GO:0007234">
    <property type="term" value="P:osmosensory signaling via phosphorelay pathway"/>
    <property type="evidence" value="ECO:0007669"/>
    <property type="project" value="TreeGrafter"/>
</dbReference>
<dbReference type="CDD" id="cd06225">
    <property type="entry name" value="HAMP"/>
    <property type="match status" value="1"/>
</dbReference>
<dbReference type="CDD" id="cd00075">
    <property type="entry name" value="HATPase"/>
    <property type="match status" value="1"/>
</dbReference>
<dbReference type="CDD" id="cd00082">
    <property type="entry name" value="HisKA"/>
    <property type="match status" value="1"/>
</dbReference>
<dbReference type="CDD" id="cd00130">
    <property type="entry name" value="PAS"/>
    <property type="match status" value="1"/>
</dbReference>
<dbReference type="FunFam" id="1.10.8.500:FF:000001">
    <property type="entry name" value="Cell wall metabolism sensor histidine kinase"/>
    <property type="match status" value="1"/>
</dbReference>
<dbReference type="FunFam" id="3.30.450.20:FF:000037">
    <property type="entry name" value="Cell wall metabolism sensor histidine kinase"/>
    <property type="match status" value="1"/>
</dbReference>
<dbReference type="FunFam" id="3.30.565.10:FF:000006">
    <property type="entry name" value="Sensor histidine kinase WalK"/>
    <property type="match status" value="1"/>
</dbReference>
<dbReference type="FunFam" id="1.10.287.130:FF:000001">
    <property type="entry name" value="Two-component sensor histidine kinase"/>
    <property type="match status" value="1"/>
</dbReference>
<dbReference type="Gene3D" id="1.10.287.130">
    <property type="match status" value="1"/>
</dbReference>
<dbReference type="Gene3D" id="1.10.8.500">
    <property type="entry name" value="HAMP domain in histidine kinase"/>
    <property type="match status" value="1"/>
</dbReference>
<dbReference type="Gene3D" id="3.30.565.10">
    <property type="entry name" value="Histidine kinase-like ATPase, C-terminal domain"/>
    <property type="match status" value="1"/>
</dbReference>
<dbReference type="Gene3D" id="3.30.450.20">
    <property type="entry name" value="PAS domain"/>
    <property type="match status" value="2"/>
</dbReference>
<dbReference type="InterPro" id="IPR003660">
    <property type="entry name" value="HAMP_dom"/>
</dbReference>
<dbReference type="InterPro" id="IPR036890">
    <property type="entry name" value="HATPase_C_sf"/>
</dbReference>
<dbReference type="InterPro" id="IPR005467">
    <property type="entry name" value="His_kinase_dom"/>
</dbReference>
<dbReference type="InterPro" id="IPR003661">
    <property type="entry name" value="HisK_dim/P_dom"/>
</dbReference>
<dbReference type="InterPro" id="IPR036097">
    <property type="entry name" value="HisK_dim/P_sf"/>
</dbReference>
<dbReference type="InterPro" id="IPR052545">
    <property type="entry name" value="Light-responsive_reg"/>
</dbReference>
<dbReference type="InterPro" id="IPR000014">
    <property type="entry name" value="PAS"/>
</dbReference>
<dbReference type="InterPro" id="IPR000700">
    <property type="entry name" value="PAS-assoc_C"/>
</dbReference>
<dbReference type="InterPro" id="IPR035965">
    <property type="entry name" value="PAS-like_dom_sf"/>
</dbReference>
<dbReference type="InterPro" id="IPR049814">
    <property type="entry name" value="Resp_reg_WalK"/>
</dbReference>
<dbReference type="InterPro" id="IPR029151">
    <property type="entry name" value="Sensor-like_sf"/>
</dbReference>
<dbReference type="InterPro" id="IPR004358">
    <property type="entry name" value="Sig_transdc_His_kin-like_C"/>
</dbReference>
<dbReference type="NCBIfam" id="NF033092">
    <property type="entry name" value="HK_WalK"/>
    <property type="match status" value="1"/>
</dbReference>
<dbReference type="NCBIfam" id="TIGR00229">
    <property type="entry name" value="sensory_box"/>
    <property type="match status" value="1"/>
</dbReference>
<dbReference type="PANTHER" id="PTHR42878:SF7">
    <property type="entry name" value="SENSOR HISTIDINE KINASE GLRK"/>
    <property type="match status" value="1"/>
</dbReference>
<dbReference type="PANTHER" id="PTHR42878">
    <property type="entry name" value="TWO-COMPONENT HISTIDINE KINASE"/>
    <property type="match status" value="1"/>
</dbReference>
<dbReference type="Pfam" id="PF23846">
    <property type="entry name" value="Cache_WalK"/>
    <property type="match status" value="1"/>
</dbReference>
<dbReference type="Pfam" id="PF00672">
    <property type="entry name" value="HAMP"/>
    <property type="match status" value="1"/>
</dbReference>
<dbReference type="Pfam" id="PF02518">
    <property type="entry name" value="HATPase_c"/>
    <property type="match status" value="1"/>
</dbReference>
<dbReference type="Pfam" id="PF00512">
    <property type="entry name" value="HisKA"/>
    <property type="match status" value="1"/>
</dbReference>
<dbReference type="Pfam" id="PF13426">
    <property type="entry name" value="PAS_9"/>
    <property type="match status" value="1"/>
</dbReference>
<dbReference type="PRINTS" id="PR00344">
    <property type="entry name" value="BCTRLSENSOR"/>
</dbReference>
<dbReference type="SMART" id="SM00304">
    <property type="entry name" value="HAMP"/>
    <property type="match status" value="1"/>
</dbReference>
<dbReference type="SMART" id="SM00387">
    <property type="entry name" value="HATPase_c"/>
    <property type="match status" value="1"/>
</dbReference>
<dbReference type="SMART" id="SM00388">
    <property type="entry name" value="HisKA"/>
    <property type="match status" value="1"/>
</dbReference>
<dbReference type="SMART" id="SM00091">
    <property type="entry name" value="PAS"/>
    <property type="match status" value="1"/>
</dbReference>
<dbReference type="SUPFAM" id="SSF55874">
    <property type="entry name" value="ATPase domain of HSP90 chaperone/DNA topoisomerase II/histidine kinase"/>
    <property type="match status" value="1"/>
</dbReference>
<dbReference type="SUPFAM" id="SSF158472">
    <property type="entry name" value="HAMP domain-like"/>
    <property type="match status" value="1"/>
</dbReference>
<dbReference type="SUPFAM" id="SSF47384">
    <property type="entry name" value="Homodimeric domain of signal transducing histidine kinase"/>
    <property type="match status" value="1"/>
</dbReference>
<dbReference type="SUPFAM" id="SSF55785">
    <property type="entry name" value="PYP-like sensor domain (PAS domain)"/>
    <property type="match status" value="1"/>
</dbReference>
<dbReference type="SUPFAM" id="SSF103190">
    <property type="entry name" value="Sensory domain-like"/>
    <property type="match status" value="1"/>
</dbReference>
<dbReference type="PROSITE" id="PS50885">
    <property type="entry name" value="HAMP"/>
    <property type="match status" value="1"/>
</dbReference>
<dbReference type="PROSITE" id="PS50109">
    <property type="entry name" value="HIS_KIN"/>
    <property type="match status" value="1"/>
</dbReference>
<dbReference type="PROSITE" id="PS50113">
    <property type="entry name" value="PAC"/>
    <property type="match status" value="1"/>
</dbReference>
<dbReference type="PROSITE" id="PS50112">
    <property type="entry name" value="PAS"/>
    <property type="match status" value="1"/>
</dbReference>
<comment type="function">
    <text evidence="3">Member of the two-component regulatory system WalK/WalR that regulates genes involved in cell wall metabolism, virulence regulation, biofilm production, oxidative stress resistance and antibiotic resistance via direct or indirect regulation of autolysins. Functions as a sensor protein kinase which is autophosphorylated at a histidine residue in the dimerization domain and transfers its phosphate group to the conserved aspartic acid residue in the regulatory domain of WalR. In turn, WalR binds to the upstream promoter regions of the target genes to positively and negatively regulate their expression.</text>
</comment>
<comment type="catalytic activity">
    <reaction evidence="3">
        <text>ATP + protein L-histidine = ADP + protein N-phospho-L-histidine.</text>
        <dbReference type="EC" id="2.7.13.3"/>
    </reaction>
</comment>
<comment type="activity regulation">
    <text evidence="3">By zinc. Zinc-binding negatively regulates WalK kinase activity and thus autophosphorylation.</text>
</comment>
<comment type="subunit">
    <text evidence="2">Forms homodimers. Forms homooligomers.</text>
</comment>
<comment type="subcellular location">
    <subcellularLocation>
        <location evidence="9">Cell membrane</location>
        <topology evidence="4">Multi-pass membrane protein</topology>
    </subcellularLocation>
</comment>
<comment type="PTM">
    <text evidence="3">Autophosphorylated.</text>
</comment>
<organism>
    <name type="scientific">Staphylococcus aureus (strain USA300)</name>
    <dbReference type="NCBI Taxonomy" id="367830"/>
    <lineage>
        <taxon>Bacteria</taxon>
        <taxon>Bacillati</taxon>
        <taxon>Bacillota</taxon>
        <taxon>Bacilli</taxon>
        <taxon>Bacillales</taxon>
        <taxon>Staphylococcaceae</taxon>
        <taxon>Staphylococcus</taxon>
    </lineage>
</organism>
<sequence>MKWLKQLQSLHTKLVIVYVLLIIIGMQIIGLYFTNNLEKELLDNFKKNITQYAKQLEISIEKVYDEKGSVNAQKDIQNLLSEYANRQEIGEIRFIDKDQIIIATTKQSNRSLINQKANDSSVQKALSLGQSNDHLILKDYGGGKDRVWVYNIPVKVDKKVIGNIYIESKINDVYNQLNNINQIFIVGTAISLLITVILGFFIARTITKPITDMRNQTVEMSRGNYTQRVKIYGNDEIGELALAFNNLSKRVQEAQANTESEKRRLDSVITHMSDGIIATDRRGRIRIVNDMALKMLGMAKEDIIGYYMLSVLSLEDEFKLEEIQENNDSFLLDLNEEEGLIARVNFSTIVQETGFVTGYIAVLHDVTEQQQVERERREFVANVSHELRTPLTSMNSYIEALEEGAWKDEELAPQFLSVTREETERMIRLVNDLLQLSKMDNESDQINKEIIDFNMFINKIINRHEMSAKDTTFIRDIPKKTIFTEFDPDKMTQVFDNVITNAMKYSRGDKRVEFHVKQNPLYNRMTIRIKDNGIGIPINKVDKIFDRFYRVDKARTRKMGGTGLGLAISKEIVEAHNGRIWANSVEGQGTSIFITLPCEVIEDGDWDE</sequence>
<gene>
    <name type="primary">walK</name>
    <name type="ordered locus">SAUSA300_0021</name>
</gene>
<proteinExistence type="inferred from homology"/>
<keyword id="KW-0067">ATP-binding</keyword>
<keyword id="KW-1003">Cell membrane</keyword>
<keyword id="KW-0418">Kinase</keyword>
<keyword id="KW-0472">Membrane</keyword>
<keyword id="KW-0479">Metal-binding</keyword>
<keyword id="KW-0547">Nucleotide-binding</keyword>
<keyword id="KW-0597">Phosphoprotein</keyword>
<keyword id="KW-0808">Transferase</keyword>
<keyword id="KW-0812">Transmembrane</keyword>
<keyword id="KW-1133">Transmembrane helix</keyword>
<keyword id="KW-0902">Two-component regulatory system</keyword>
<keyword id="KW-0862">Zinc</keyword>
<protein>
    <recommendedName>
        <fullName evidence="9">Sensor protein kinase WalK</fullName>
        <ecNumber evidence="1">2.7.13.3</ecNumber>
    </recommendedName>
</protein>
<accession>Q2FKN7</accession>
<evidence type="ECO:0000250" key="1">
    <source>
        <dbReference type="UniProtKB" id="O34206"/>
    </source>
</evidence>
<evidence type="ECO:0000250" key="2">
    <source>
        <dbReference type="UniProtKB" id="Q2G2U4"/>
    </source>
</evidence>
<evidence type="ECO:0000250" key="3">
    <source>
        <dbReference type="UniProtKB" id="Q9RDT3"/>
    </source>
</evidence>
<evidence type="ECO:0000255" key="4"/>
<evidence type="ECO:0000255" key="5">
    <source>
        <dbReference type="PROSITE-ProRule" id="PRU00102"/>
    </source>
</evidence>
<evidence type="ECO:0000255" key="6">
    <source>
        <dbReference type="PROSITE-ProRule" id="PRU00107"/>
    </source>
</evidence>
<evidence type="ECO:0000255" key="7">
    <source>
        <dbReference type="PROSITE-ProRule" id="PRU00140"/>
    </source>
</evidence>
<evidence type="ECO:0000255" key="8">
    <source>
        <dbReference type="PROSITE-ProRule" id="PRU00141"/>
    </source>
</evidence>
<evidence type="ECO:0000305" key="9"/>
<feature type="chain" id="PRO_0000353064" description="Sensor protein kinase WalK">
    <location>
        <begin position="1"/>
        <end position="608"/>
    </location>
</feature>
<feature type="transmembrane region" description="Helical" evidence="4">
    <location>
        <begin position="14"/>
        <end position="34"/>
    </location>
</feature>
<feature type="transmembrane region" description="Helical" evidence="4">
    <location>
        <begin position="183"/>
        <end position="203"/>
    </location>
</feature>
<feature type="domain" description="HAMP" evidence="5">
    <location>
        <begin position="204"/>
        <end position="256"/>
    </location>
</feature>
<feature type="domain" description="PAS" evidence="7">
    <location>
        <begin position="261"/>
        <end position="331"/>
    </location>
</feature>
<feature type="domain" description="PAC" evidence="8">
    <location>
        <begin position="314"/>
        <end position="378"/>
    </location>
</feature>
<feature type="domain" description="Histidine kinase" evidence="6">
    <location>
        <begin position="382"/>
        <end position="600"/>
    </location>
</feature>
<feature type="binding site" evidence="3">
    <location>
        <position position="271"/>
    </location>
    <ligand>
        <name>Zn(2+)</name>
        <dbReference type="ChEBI" id="CHEBI:29105"/>
    </ligand>
</feature>
<feature type="binding site" evidence="3">
    <location>
        <position position="274"/>
    </location>
    <ligand>
        <name>Zn(2+)</name>
        <dbReference type="ChEBI" id="CHEBI:29105"/>
    </ligand>
</feature>
<feature type="binding site" evidence="3">
    <location>
        <position position="364"/>
    </location>
    <ligand>
        <name>Zn(2+)</name>
        <dbReference type="ChEBI" id="CHEBI:29105"/>
    </ligand>
</feature>
<feature type="binding site" evidence="3">
    <location>
        <position position="368"/>
    </location>
    <ligand>
        <name>Zn(2+)</name>
        <dbReference type="ChEBI" id="CHEBI:29105"/>
    </ligand>
</feature>
<feature type="modified residue" description="Phosphohistidine; by autocatalysis" evidence="6">
    <location>
        <position position="385"/>
    </location>
</feature>
<reference key="1">
    <citation type="journal article" date="2006" name="Lancet">
        <title>Complete genome sequence of USA300, an epidemic clone of community-acquired meticillin-resistant Staphylococcus aureus.</title>
        <authorList>
            <person name="Diep B.A."/>
            <person name="Gill S.R."/>
            <person name="Chang R.F."/>
            <person name="Phan T.H."/>
            <person name="Chen J.H."/>
            <person name="Davidson M.G."/>
            <person name="Lin F."/>
            <person name="Lin J."/>
            <person name="Carleton H.A."/>
            <person name="Mongodin E.F."/>
            <person name="Sensabaugh G.F."/>
            <person name="Perdreau-Remington F."/>
        </authorList>
    </citation>
    <scope>NUCLEOTIDE SEQUENCE [LARGE SCALE GENOMIC DNA]</scope>
    <source>
        <strain>USA300</strain>
    </source>
</reference>
<name>WALK_STAA3</name>